<keyword id="KW-0170">Cobalt</keyword>
<keyword id="KW-0963">Cytoplasm</keyword>
<keyword id="KW-0460">Magnesium</keyword>
<keyword id="KW-0479">Metal-binding</keyword>
<keyword id="KW-0520">NAD</keyword>
<keyword id="KW-0521">NADP</keyword>
<keyword id="KW-0560">Oxidoreductase</keyword>
<keyword id="KW-0664">Pyridoxine biosynthesis</keyword>
<keyword id="KW-0862">Zinc</keyword>
<evidence type="ECO:0000255" key="1">
    <source>
        <dbReference type="HAMAP-Rule" id="MF_00536"/>
    </source>
</evidence>
<proteinExistence type="inferred from homology"/>
<sequence length="326" mass="33992">MRPELALVPGEPAGIGPELCVRLVQQPREDCRLLAFADPDTLRAAAAALNLPLQLLPEDAEARVPGDLRVRAVPNAVPSHFGHADPANAGAVIGALLGAGQACLSGELHGVVTGPVHKAVINEGGIAYSGTTELLADQAGVKVVMMLANHIVRVALATTHLPLRDVADAITAPGLEHTLRTVHAALRREFGLAAPRIAVLGLNPHAGEDGHLGREELDLVIPLLQRLRAEGMDLVGPLPADTAFLPAKLAGFDTVLAMYHDQGLPVLKYSGFEQAVNLTLGLPYPRVAVDHGTALDLAGRGIADPSSLQAATTLCAQLARQRTLSA</sequence>
<gene>
    <name evidence="1" type="primary">pdxA</name>
    <name type="ordered locus">Smal_0669</name>
</gene>
<dbReference type="EC" id="1.1.1.262" evidence="1"/>
<dbReference type="EMBL" id="CP001111">
    <property type="protein sequence ID" value="ACF50374.1"/>
    <property type="molecule type" value="Genomic_DNA"/>
</dbReference>
<dbReference type="RefSeq" id="WP_012510103.1">
    <property type="nucleotide sequence ID" value="NC_011071.1"/>
</dbReference>
<dbReference type="SMR" id="B4SK42"/>
<dbReference type="STRING" id="391008.Smal_0669"/>
<dbReference type="KEGG" id="smt:Smal_0669"/>
<dbReference type="eggNOG" id="COG1995">
    <property type="taxonomic scope" value="Bacteria"/>
</dbReference>
<dbReference type="HOGENOM" id="CLU_040168_1_0_6"/>
<dbReference type="OrthoDB" id="9801783at2"/>
<dbReference type="UniPathway" id="UPA00244">
    <property type="reaction ID" value="UER00312"/>
</dbReference>
<dbReference type="Proteomes" id="UP000001867">
    <property type="component" value="Chromosome"/>
</dbReference>
<dbReference type="GO" id="GO:0005737">
    <property type="term" value="C:cytoplasm"/>
    <property type="evidence" value="ECO:0007669"/>
    <property type="project" value="UniProtKB-SubCell"/>
</dbReference>
<dbReference type="GO" id="GO:0050570">
    <property type="term" value="F:4-hydroxythreonine-4-phosphate dehydrogenase activity"/>
    <property type="evidence" value="ECO:0007669"/>
    <property type="project" value="UniProtKB-UniRule"/>
</dbReference>
<dbReference type="GO" id="GO:0050897">
    <property type="term" value="F:cobalt ion binding"/>
    <property type="evidence" value="ECO:0007669"/>
    <property type="project" value="UniProtKB-UniRule"/>
</dbReference>
<dbReference type="GO" id="GO:0000287">
    <property type="term" value="F:magnesium ion binding"/>
    <property type="evidence" value="ECO:0007669"/>
    <property type="project" value="UniProtKB-UniRule"/>
</dbReference>
<dbReference type="GO" id="GO:0051287">
    <property type="term" value="F:NAD binding"/>
    <property type="evidence" value="ECO:0007669"/>
    <property type="project" value="InterPro"/>
</dbReference>
<dbReference type="GO" id="GO:0008270">
    <property type="term" value="F:zinc ion binding"/>
    <property type="evidence" value="ECO:0007669"/>
    <property type="project" value="UniProtKB-UniRule"/>
</dbReference>
<dbReference type="GO" id="GO:0042823">
    <property type="term" value="P:pyridoxal phosphate biosynthetic process"/>
    <property type="evidence" value="ECO:0007669"/>
    <property type="project" value="UniProtKB-UniRule"/>
</dbReference>
<dbReference type="GO" id="GO:0008615">
    <property type="term" value="P:pyridoxine biosynthetic process"/>
    <property type="evidence" value="ECO:0007669"/>
    <property type="project" value="UniProtKB-UniRule"/>
</dbReference>
<dbReference type="Gene3D" id="3.40.718.10">
    <property type="entry name" value="Isopropylmalate Dehydrogenase"/>
    <property type="match status" value="1"/>
</dbReference>
<dbReference type="HAMAP" id="MF_00536">
    <property type="entry name" value="PdxA"/>
    <property type="match status" value="1"/>
</dbReference>
<dbReference type="InterPro" id="IPR037510">
    <property type="entry name" value="PdxA"/>
</dbReference>
<dbReference type="InterPro" id="IPR005255">
    <property type="entry name" value="PdxA_fam"/>
</dbReference>
<dbReference type="NCBIfam" id="TIGR00557">
    <property type="entry name" value="pdxA"/>
    <property type="match status" value="1"/>
</dbReference>
<dbReference type="PANTHER" id="PTHR30004">
    <property type="entry name" value="4-HYDROXYTHREONINE-4-PHOSPHATE DEHYDROGENASE"/>
    <property type="match status" value="1"/>
</dbReference>
<dbReference type="PANTHER" id="PTHR30004:SF5">
    <property type="entry name" value="4-HYDROXYTHREONINE-4-PHOSPHATE DEHYDROGENASE"/>
    <property type="match status" value="1"/>
</dbReference>
<dbReference type="Pfam" id="PF04166">
    <property type="entry name" value="PdxA"/>
    <property type="match status" value="1"/>
</dbReference>
<dbReference type="SUPFAM" id="SSF53659">
    <property type="entry name" value="Isocitrate/Isopropylmalate dehydrogenase-like"/>
    <property type="match status" value="1"/>
</dbReference>
<comment type="function">
    <text evidence="1">Catalyzes the NAD(P)-dependent oxidation of 4-(phosphooxy)-L-threonine (HTP) into 2-amino-3-oxo-4-(phosphooxy)butyric acid which spontaneously decarboxylates to form 3-amino-2-oxopropyl phosphate (AHAP).</text>
</comment>
<comment type="catalytic activity">
    <reaction evidence="1">
        <text>4-(phosphooxy)-L-threonine + NAD(+) = 3-amino-2-oxopropyl phosphate + CO2 + NADH</text>
        <dbReference type="Rhea" id="RHEA:32275"/>
        <dbReference type="ChEBI" id="CHEBI:16526"/>
        <dbReference type="ChEBI" id="CHEBI:57279"/>
        <dbReference type="ChEBI" id="CHEBI:57540"/>
        <dbReference type="ChEBI" id="CHEBI:57945"/>
        <dbReference type="ChEBI" id="CHEBI:58452"/>
        <dbReference type="EC" id="1.1.1.262"/>
    </reaction>
</comment>
<comment type="cofactor">
    <cofactor evidence="1">
        <name>Zn(2+)</name>
        <dbReference type="ChEBI" id="CHEBI:29105"/>
    </cofactor>
    <cofactor evidence="1">
        <name>Mg(2+)</name>
        <dbReference type="ChEBI" id="CHEBI:18420"/>
    </cofactor>
    <cofactor evidence="1">
        <name>Co(2+)</name>
        <dbReference type="ChEBI" id="CHEBI:48828"/>
    </cofactor>
    <text evidence="1">Binds 1 divalent metal cation per subunit. Can use ions such as Zn(2+), Mg(2+) or Co(2+).</text>
</comment>
<comment type="pathway">
    <text evidence="1">Cofactor biosynthesis; pyridoxine 5'-phosphate biosynthesis; pyridoxine 5'-phosphate from D-erythrose 4-phosphate: step 4/5.</text>
</comment>
<comment type="subunit">
    <text evidence="1">Homodimer.</text>
</comment>
<comment type="subcellular location">
    <subcellularLocation>
        <location evidence="1">Cytoplasm</location>
    </subcellularLocation>
</comment>
<comment type="miscellaneous">
    <text evidence="1">The active site is located at the dimer interface.</text>
</comment>
<comment type="similarity">
    <text evidence="1">Belongs to the PdxA family.</text>
</comment>
<accession>B4SK42</accession>
<name>PDXA_STRM5</name>
<organism>
    <name type="scientific">Stenotrophomonas maltophilia (strain R551-3)</name>
    <dbReference type="NCBI Taxonomy" id="391008"/>
    <lineage>
        <taxon>Bacteria</taxon>
        <taxon>Pseudomonadati</taxon>
        <taxon>Pseudomonadota</taxon>
        <taxon>Gammaproteobacteria</taxon>
        <taxon>Lysobacterales</taxon>
        <taxon>Lysobacteraceae</taxon>
        <taxon>Stenotrophomonas</taxon>
        <taxon>Stenotrophomonas maltophilia group</taxon>
    </lineage>
</organism>
<feature type="chain" id="PRO_1000128263" description="4-hydroxythreonine-4-phosphate dehydrogenase">
    <location>
        <begin position="1"/>
        <end position="326"/>
    </location>
</feature>
<feature type="binding site" evidence="1">
    <location>
        <position position="132"/>
    </location>
    <ligand>
        <name>substrate</name>
    </ligand>
</feature>
<feature type="binding site" evidence="1">
    <location>
        <position position="160"/>
    </location>
    <ligand>
        <name>a divalent metal cation</name>
        <dbReference type="ChEBI" id="CHEBI:60240"/>
        <note>ligand shared between dimeric partners</note>
    </ligand>
</feature>
<feature type="binding site" evidence="1">
    <location>
        <position position="205"/>
    </location>
    <ligand>
        <name>a divalent metal cation</name>
        <dbReference type="ChEBI" id="CHEBI:60240"/>
        <note>ligand shared between dimeric partners</note>
    </ligand>
</feature>
<feature type="binding site" evidence="1">
    <location>
        <position position="260"/>
    </location>
    <ligand>
        <name>a divalent metal cation</name>
        <dbReference type="ChEBI" id="CHEBI:60240"/>
        <note>ligand shared between dimeric partners</note>
    </ligand>
</feature>
<feature type="binding site" evidence="1">
    <location>
        <position position="268"/>
    </location>
    <ligand>
        <name>substrate</name>
    </ligand>
</feature>
<feature type="binding site" evidence="1">
    <location>
        <position position="277"/>
    </location>
    <ligand>
        <name>substrate</name>
    </ligand>
</feature>
<feature type="binding site" evidence="1">
    <location>
        <position position="286"/>
    </location>
    <ligand>
        <name>substrate</name>
    </ligand>
</feature>
<reference key="1">
    <citation type="submission" date="2008-06" db="EMBL/GenBank/DDBJ databases">
        <title>Complete sequence of Stenotrophomonas maltophilia R551-3.</title>
        <authorList>
            <consortium name="US DOE Joint Genome Institute"/>
            <person name="Lucas S."/>
            <person name="Copeland A."/>
            <person name="Lapidus A."/>
            <person name="Glavina del Rio T."/>
            <person name="Dalin E."/>
            <person name="Tice H."/>
            <person name="Pitluck S."/>
            <person name="Chain P."/>
            <person name="Malfatti S."/>
            <person name="Shin M."/>
            <person name="Vergez L."/>
            <person name="Lang D."/>
            <person name="Schmutz J."/>
            <person name="Larimer F."/>
            <person name="Land M."/>
            <person name="Hauser L."/>
            <person name="Kyrpides N."/>
            <person name="Mikhailova N."/>
            <person name="Taghavi S."/>
            <person name="Monchy S."/>
            <person name="Newman L."/>
            <person name="Vangronsveld J."/>
            <person name="van der Lelie D."/>
            <person name="Richardson P."/>
        </authorList>
    </citation>
    <scope>NUCLEOTIDE SEQUENCE [LARGE SCALE GENOMIC DNA]</scope>
    <source>
        <strain>R551-3</strain>
    </source>
</reference>
<protein>
    <recommendedName>
        <fullName evidence="1">4-hydroxythreonine-4-phosphate dehydrogenase</fullName>
        <ecNumber evidence="1">1.1.1.262</ecNumber>
    </recommendedName>
    <alternativeName>
        <fullName evidence="1">4-(phosphohydroxy)-L-threonine dehydrogenase</fullName>
    </alternativeName>
</protein>